<protein>
    <recommendedName>
        <fullName evidence="1">2-aminoethylphosphonate--pyruvate transaminase</fullName>
        <ecNumber evidence="1">2.6.1.37</ecNumber>
    </recommendedName>
    <alternativeName>
        <fullName evidence="1">2-aminoethylphosphonate aminotransferase</fullName>
    </alternativeName>
    <alternativeName>
        <fullName evidence="1">AEP transaminase</fullName>
        <shortName evidence="1">AEPT</shortName>
    </alternativeName>
</protein>
<keyword id="KW-0032">Aminotransferase</keyword>
<keyword id="KW-0663">Pyridoxal phosphate</keyword>
<keyword id="KW-0670">Pyruvate</keyword>
<keyword id="KW-0808">Transferase</keyword>
<evidence type="ECO:0000255" key="1">
    <source>
        <dbReference type="HAMAP-Rule" id="MF_01376"/>
    </source>
</evidence>
<sequence length="365" mass="41399">MNENHYLLLTPGPLTTTKTVKEVMLYDWCTWDVEYNTMVQDVRNRLVSLATKEEEKYTTVLMQGSGTFSVEAVIGSVIPRKGKLLVCTNGAYGKRIVQMAEMLHIDVVVSQTEEWEPTNIAEVEQLLQQDKEITHIVVVHCETTTGIINPIVDVCKLGKKYGKVTLVDAMSSFGGIEIDIAELQIDFLISSANKCIQGVPGFGFVIANRDELLKCKGQARSLSLDLYDQWETMEEQNGKWRFTSPTHVVHAFYQALLELEEEGGVRARYNRYYSNQKLLVHKMKEMGFKPLVDEKYQSPIITSFIYPEAGFEFLQLYNELKRYGFVIYPGKISKVDTFRIGNIGDVHEDDINRLVDSIAKGVVIG</sequence>
<dbReference type="EC" id="2.6.1.37" evidence="1"/>
<dbReference type="EMBL" id="CP000903">
    <property type="protein sequence ID" value="ABY42488.1"/>
    <property type="molecule type" value="Genomic_DNA"/>
</dbReference>
<dbReference type="RefSeq" id="WP_012260589.1">
    <property type="nucleotide sequence ID" value="NC_010184.1"/>
</dbReference>
<dbReference type="SMR" id="A9VKQ3"/>
<dbReference type="KEGG" id="bwe:BcerKBAB4_1241"/>
<dbReference type="eggNOG" id="COG0075">
    <property type="taxonomic scope" value="Bacteria"/>
</dbReference>
<dbReference type="HOGENOM" id="CLU_027686_3_1_9"/>
<dbReference type="Proteomes" id="UP000002154">
    <property type="component" value="Chromosome"/>
</dbReference>
<dbReference type="GO" id="GO:0047304">
    <property type="term" value="F:2-aminoethylphosphonate-pyruvate transaminase activity"/>
    <property type="evidence" value="ECO:0007669"/>
    <property type="project" value="UniProtKB-UniRule"/>
</dbReference>
<dbReference type="GO" id="GO:0019700">
    <property type="term" value="P:organic phosphonate catabolic process"/>
    <property type="evidence" value="ECO:0007669"/>
    <property type="project" value="InterPro"/>
</dbReference>
<dbReference type="Gene3D" id="3.90.1150.10">
    <property type="entry name" value="Aspartate Aminotransferase, domain 1"/>
    <property type="match status" value="1"/>
</dbReference>
<dbReference type="Gene3D" id="3.40.640.10">
    <property type="entry name" value="Type I PLP-dependent aspartate aminotransferase-like (Major domain)"/>
    <property type="match status" value="1"/>
</dbReference>
<dbReference type="HAMAP" id="MF_01376">
    <property type="entry name" value="PhnW_aminotrans_5"/>
    <property type="match status" value="1"/>
</dbReference>
<dbReference type="InterPro" id="IPR000192">
    <property type="entry name" value="Aminotrans_V_dom"/>
</dbReference>
<dbReference type="InterPro" id="IPR012703">
    <property type="entry name" value="NH2EtPonate_pyrv_transaminase"/>
</dbReference>
<dbReference type="InterPro" id="IPR015424">
    <property type="entry name" value="PyrdxlP-dep_Trfase"/>
</dbReference>
<dbReference type="InterPro" id="IPR015421">
    <property type="entry name" value="PyrdxlP-dep_Trfase_major"/>
</dbReference>
<dbReference type="InterPro" id="IPR015422">
    <property type="entry name" value="PyrdxlP-dep_Trfase_small"/>
</dbReference>
<dbReference type="InterPro" id="IPR024169">
    <property type="entry name" value="SP_NH2Trfase/AEP_transaminase"/>
</dbReference>
<dbReference type="NCBIfam" id="TIGR03301">
    <property type="entry name" value="PhnW-AepZ"/>
    <property type="match status" value="1"/>
</dbReference>
<dbReference type="NCBIfam" id="NF010006">
    <property type="entry name" value="PRK13479.1"/>
    <property type="match status" value="1"/>
</dbReference>
<dbReference type="NCBIfam" id="TIGR02326">
    <property type="entry name" value="transamin_PhnW"/>
    <property type="match status" value="1"/>
</dbReference>
<dbReference type="PANTHER" id="PTHR42778">
    <property type="entry name" value="2-AMINOETHYLPHOSPHONATE--PYRUVATE TRANSAMINASE"/>
    <property type="match status" value="1"/>
</dbReference>
<dbReference type="PANTHER" id="PTHR42778:SF1">
    <property type="entry name" value="2-AMINOETHYLPHOSPHONATE--PYRUVATE TRANSAMINASE"/>
    <property type="match status" value="1"/>
</dbReference>
<dbReference type="Pfam" id="PF00266">
    <property type="entry name" value="Aminotran_5"/>
    <property type="match status" value="1"/>
</dbReference>
<dbReference type="PIRSF" id="PIRSF000524">
    <property type="entry name" value="SPT"/>
    <property type="match status" value="1"/>
</dbReference>
<dbReference type="SUPFAM" id="SSF53383">
    <property type="entry name" value="PLP-dependent transferases"/>
    <property type="match status" value="1"/>
</dbReference>
<organism>
    <name type="scientific">Bacillus mycoides (strain KBAB4)</name>
    <name type="common">Bacillus weihenstephanensis</name>
    <dbReference type="NCBI Taxonomy" id="315730"/>
    <lineage>
        <taxon>Bacteria</taxon>
        <taxon>Bacillati</taxon>
        <taxon>Bacillota</taxon>
        <taxon>Bacilli</taxon>
        <taxon>Bacillales</taxon>
        <taxon>Bacillaceae</taxon>
        <taxon>Bacillus</taxon>
        <taxon>Bacillus cereus group</taxon>
    </lineage>
</organism>
<proteinExistence type="inferred from homology"/>
<name>PHNW_BACMK</name>
<comment type="function">
    <text evidence="1">Involved in phosphonate degradation.</text>
</comment>
<comment type="catalytic activity">
    <reaction evidence="1">
        <text>(2-aminoethyl)phosphonate + pyruvate = phosphonoacetaldehyde + L-alanine</text>
        <dbReference type="Rhea" id="RHEA:17021"/>
        <dbReference type="ChEBI" id="CHEBI:15361"/>
        <dbReference type="ChEBI" id="CHEBI:57418"/>
        <dbReference type="ChEBI" id="CHEBI:57972"/>
        <dbReference type="ChEBI" id="CHEBI:58383"/>
        <dbReference type="EC" id="2.6.1.37"/>
    </reaction>
</comment>
<comment type="cofactor">
    <cofactor evidence="1">
        <name>pyridoxal 5'-phosphate</name>
        <dbReference type="ChEBI" id="CHEBI:597326"/>
    </cofactor>
</comment>
<comment type="subunit">
    <text evidence="1">Homodimer.</text>
</comment>
<comment type="similarity">
    <text evidence="1">Belongs to the class-V pyridoxal-phosphate-dependent aminotransferase family. PhnW subfamily.</text>
</comment>
<feature type="chain" id="PRO_1000144849" description="2-aminoethylphosphonate--pyruvate transaminase">
    <location>
        <begin position="1"/>
        <end position="365"/>
    </location>
</feature>
<feature type="modified residue" description="N6-(pyridoxal phosphate)lysine" evidence="1">
    <location>
        <position position="194"/>
    </location>
</feature>
<gene>
    <name evidence="1" type="primary">phnW</name>
    <name type="ordered locus">BcerKBAB4_1241</name>
</gene>
<accession>A9VKQ3</accession>
<reference key="1">
    <citation type="journal article" date="2008" name="Chem. Biol. Interact.">
        <title>Extending the Bacillus cereus group genomics to putative food-borne pathogens of different toxicity.</title>
        <authorList>
            <person name="Lapidus A."/>
            <person name="Goltsman E."/>
            <person name="Auger S."/>
            <person name="Galleron N."/>
            <person name="Segurens B."/>
            <person name="Dossat C."/>
            <person name="Land M.L."/>
            <person name="Broussolle V."/>
            <person name="Brillard J."/>
            <person name="Guinebretiere M.-H."/>
            <person name="Sanchis V."/>
            <person name="Nguen-the C."/>
            <person name="Lereclus D."/>
            <person name="Richardson P."/>
            <person name="Wincker P."/>
            <person name="Weissenbach J."/>
            <person name="Ehrlich S.D."/>
            <person name="Sorokin A."/>
        </authorList>
    </citation>
    <scope>NUCLEOTIDE SEQUENCE [LARGE SCALE GENOMIC DNA]</scope>
    <source>
        <strain>KBAB4</strain>
    </source>
</reference>